<proteinExistence type="evidence at protein level"/>
<protein>
    <recommendedName>
        <fullName>Neuropilin and tolloid-like protein 2</fullName>
    </recommendedName>
    <alternativeName>
        <fullName>Brain-specific transmembrane protein containing 2 CUB and 1 LDL-receptor class A domains protein 2</fullName>
    </alternativeName>
</protein>
<comment type="function">
    <text evidence="1">Accessory subunit of neuronal kainate-sensitive glutamate receptors, GRIK2 and GRIK3. Increases kainate-receptor channel activity, slowing the decay kinetics of the receptors, without affecting their expression at the cell surface, and increasing the open probability of the receptor channels. Modulates the agonist sensitivity of kainate receptors. Slows the decay of kainate receptor-mediated excitatory postsynaptic currents (EPSCs), thus directly influencing synaptic transmission (By similarity).</text>
</comment>
<comment type="subunit">
    <text evidence="1">Interacts with GRIK2 and GRIK3, but neither with AMPA-nor with NMDA-sensitive glutamate receptors.</text>
</comment>
<comment type="interaction">
    <interactant intactId="EBI-25852289">
        <id>Q8NC67-2</id>
    </interactant>
    <interactant intactId="EBI-21603100">
        <id>P26378-2</id>
        <label>ELAVL4</label>
    </interactant>
    <organismsDiffer>false</organismsDiffer>
    <experiments>3</experiments>
</comment>
<comment type="interaction">
    <interactant intactId="EBI-25852289">
        <id>Q8NC67-2</id>
    </interactant>
    <interactant intactId="EBI-348399">
        <id>P22607</id>
        <label>FGFR3</label>
    </interactant>
    <organismsDiffer>false</organismsDiffer>
    <experiments>3</experiments>
</comment>
<comment type="interaction">
    <interactant intactId="EBI-25852289">
        <id>Q8NC67-2</id>
    </interactant>
    <interactant intactId="EBI-351506">
        <id>P06396</id>
        <label>GSN</label>
    </interactant>
    <organismsDiffer>false</organismsDiffer>
    <experiments>3</experiments>
</comment>
<comment type="interaction">
    <interactant intactId="EBI-25852289">
        <id>Q8NC67-2</id>
    </interactant>
    <interactant intactId="EBI-5235340">
        <id>Q7Z699</id>
        <label>SPRED1</label>
    </interactant>
    <organismsDiffer>false</organismsDiffer>
    <experiments>3</experiments>
</comment>
<comment type="interaction">
    <interactant intactId="EBI-25852289">
        <id>Q8NC67-2</id>
    </interactant>
    <interactant intactId="EBI-741480">
        <id>Q9UMX0</id>
        <label>UBQLN1</label>
    </interactant>
    <organismsDiffer>false</organismsDiffer>
    <experiments>3</experiments>
</comment>
<comment type="subcellular location">
    <subcellularLocation>
        <location evidence="8">Membrane</location>
        <topology evidence="8">Single-pass type I membrane protein</topology>
    </subcellularLocation>
</comment>
<comment type="alternative products">
    <event type="alternative splicing"/>
    <isoform>
        <id>Q8NC67-1</id>
        <name>1</name>
        <sequence type="displayed"/>
    </isoform>
    <isoform>
        <id>Q8NC67-2</id>
        <name>2</name>
        <sequence type="described" ref="VSP_012856 VSP_012857"/>
    </isoform>
    <isoform>
        <id>Q8NC67-3</id>
        <name>3</name>
        <sequence type="described" ref="VSP_053795"/>
    </isoform>
</comment>
<comment type="PTM">
    <text evidence="1">N-glycosylated.</text>
</comment>
<name>NETO2_HUMAN</name>
<reference key="1">
    <citation type="journal article" date="2003" name="Genome Res.">
        <title>The secreted protein discovery initiative (SPDI), a large-scale effort to identify novel human secreted and transmembrane proteins: a bioinformatics assessment.</title>
        <authorList>
            <person name="Clark H.F."/>
            <person name="Gurney A.L."/>
            <person name="Abaya E."/>
            <person name="Baker K."/>
            <person name="Baldwin D.T."/>
            <person name="Brush J."/>
            <person name="Chen J."/>
            <person name="Chow B."/>
            <person name="Chui C."/>
            <person name="Crowley C."/>
            <person name="Currell B."/>
            <person name="Deuel B."/>
            <person name="Dowd P."/>
            <person name="Eaton D."/>
            <person name="Foster J.S."/>
            <person name="Grimaldi C."/>
            <person name="Gu Q."/>
            <person name="Hass P.E."/>
            <person name="Heldens S."/>
            <person name="Huang A."/>
            <person name="Kim H.S."/>
            <person name="Klimowski L."/>
            <person name="Jin Y."/>
            <person name="Johnson S."/>
            <person name="Lee J."/>
            <person name="Lewis L."/>
            <person name="Liao D."/>
            <person name="Mark M.R."/>
            <person name="Robbie E."/>
            <person name="Sanchez C."/>
            <person name="Schoenfeld J."/>
            <person name="Seshagiri S."/>
            <person name="Simmons L."/>
            <person name="Singh J."/>
            <person name="Smith V."/>
            <person name="Stinson J."/>
            <person name="Vagts A."/>
            <person name="Vandlen R.L."/>
            <person name="Watanabe C."/>
            <person name="Wieand D."/>
            <person name="Woods K."/>
            <person name="Xie M.-H."/>
            <person name="Yansura D.G."/>
            <person name="Yi S."/>
            <person name="Yu G."/>
            <person name="Yuan J."/>
            <person name="Zhang M."/>
            <person name="Zhang Z."/>
            <person name="Goddard A.D."/>
            <person name="Wood W.I."/>
            <person name="Godowski P.J."/>
            <person name="Gray A.M."/>
        </authorList>
    </citation>
    <scope>NUCLEOTIDE SEQUENCE [LARGE SCALE MRNA] (ISOFORM 1)</scope>
</reference>
<reference key="2">
    <citation type="journal article" date="2004" name="Nat. Genet.">
        <title>Complete sequencing and characterization of 21,243 full-length human cDNAs.</title>
        <authorList>
            <person name="Ota T."/>
            <person name="Suzuki Y."/>
            <person name="Nishikawa T."/>
            <person name="Otsuki T."/>
            <person name="Sugiyama T."/>
            <person name="Irie R."/>
            <person name="Wakamatsu A."/>
            <person name="Hayashi K."/>
            <person name="Sato H."/>
            <person name="Nagai K."/>
            <person name="Kimura K."/>
            <person name="Makita H."/>
            <person name="Sekine M."/>
            <person name="Obayashi M."/>
            <person name="Nishi T."/>
            <person name="Shibahara T."/>
            <person name="Tanaka T."/>
            <person name="Ishii S."/>
            <person name="Yamamoto J."/>
            <person name="Saito K."/>
            <person name="Kawai Y."/>
            <person name="Isono Y."/>
            <person name="Nakamura Y."/>
            <person name="Nagahari K."/>
            <person name="Murakami K."/>
            <person name="Yasuda T."/>
            <person name="Iwayanagi T."/>
            <person name="Wagatsuma M."/>
            <person name="Shiratori A."/>
            <person name="Sudo H."/>
            <person name="Hosoiri T."/>
            <person name="Kaku Y."/>
            <person name="Kodaira H."/>
            <person name="Kondo H."/>
            <person name="Sugawara M."/>
            <person name="Takahashi M."/>
            <person name="Kanda K."/>
            <person name="Yokoi T."/>
            <person name="Furuya T."/>
            <person name="Kikkawa E."/>
            <person name="Omura Y."/>
            <person name="Abe K."/>
            <person name="Kamihara K."/>
            <person name="Katsuta N."/>
            <person name="Sato K."/>
            <person name="Tanikawa M."/>
            <person name="Yamazaki M."/>
            <person name="Ninomiya K."/>
            <person name="Ishibashi T."/>
            <person name="Yamashita H."/>
            <person name="Murakawa K."/>
            <person name="Fujimori K."/>
            <person name="Tanai H."/>
            <person name="Kimata M."/>
            <person name="Watanabe M."/>
            <person name="Hiraoka S."/>
            <person name="Chiba Y."/>
            <person name="Ishida S."/>
            <person name="Ono Y."/>
            <person name="Takiguchi S."/>
            <person name="Watanabe S."/>
            <person name="Yosida M."/>
            <person name="Hotuta T."/>
            <person name="Kusano J."/>
            <person name="Kanehori K."/>
            <person name="Takahashi-Fujii A."/>
            <person name="Hara H."/>
            <person name="Tanase T.-O."/>
            <person name="Nomura Y."/>
            <person name="Togiya S."/>
            <person name="Komai F."/>
            <person name="Hara R."/>
            <person name="Takeuchi K."/>
            <person name="Arita M."/>
            <person name="Imose N."/>
            <person name="Musashino K."/>
            <person name="Yuuki H."/>
            <person name="Oshima A."/>
            <person name="Sasaki N."/>
            <person name="Aotsuka S."/>
            <person name="Yoshikawa Y."/>
            <person name="Matsunawa H."/>
            <person name="Ichihara T."/>
            <person name="Shiohata N."/>
            <person name="Sano S."/>
            <person name="Moriya S."/>
            <person name="Momiyama H."/>
            <person name="Satoh N."/>
            <person name="Takami S."/>
            <person name="Terashima Y."/>
            <person name="Suzuki O."/>
            <person name="Nakagawa S."/>
            <person name="Senoh A."/>
            <person name="Mizoguchi H."/>
            <person name="Goto Y."/>
            <person name="Shimizu F."/>
            <person name="Wakebe H."/>
            <person name="Hishigaki H."/>
            <person name="Watanabe T."/>
            <person name="Sugiyama A."/>
            <person name="Takemoto M."/>
            <person name="Kawakami B."/>
            <person name="Yamazaki M."/>
            <person name="Watanabe K."/>
            <person name="Kumagai A."/>
            <person name="Itakura S."/>
            <person name="Fukuzumi Y."/>
            <person name="Fujimori Y."/>
            <person name="Komiyama M."/>
            <person name="Tashiro H."/>
            <person name="Tanigami A."/>
            <person name="Fujiwara T."/>
            <person name="Ono T."/>
            <person name="Yamada K."/>
            <person name="Fujii Y."/>
            <person name="Ozaki K."/>
            <person name="Hirao M."/>
            <person name="Ohmori Y."/>
            <person name="Kawabata A."/>
            <person name="Hikiji T."/>
            <person name="Kobatake N."/>
            <person name="Inagaki H."/>
            <person name="Ikema Y."/>
            <person name="Okamoto S."/>
            <person name="Okitani R."/>
            <person name="Kawakami T."/>
            <person name="Noguchi S."/>
            <person name="Itoh T."/>
            <person name="Shigeta K."/>
            <person name="Senba T."/>
            <person name="Matsumura K."/>
            <person name="Nakajima Y."/>
            <person name="Mizuno T."/>
            <person name="Morinaga M."/>
            <person name="Sasaki M."/>
            <person name="Togashi T."/>
            <person name="Oyama M."/>
            <person name="Hata H."/>
            <person name="Watanabe M."/>
            <person name="Komatsu T."/>
            <person name="Mizushima-Sugano J."/>
            <person name="Satoh T."/>
            <person name="Shirai Y."/>
            <person name="Takahashi Y."/>
            <person name="Nakagawa K."/>
            <person name="Okumura K."/>
            <person name="Nagase T."/>
            <person name="Nomura N."/>
            <person name="Kikuchi H."/>
            <person name="Masuho Y."/>
            <person name="Yamashita R."/>
            <person name="Nakai K."/>
            <person name="Yada T."/>
            <person name="Nakamura Y."/>
            <person name="Ohara O."/>
            <person name="Isogai T."/>
            <person name="Sugano S."/>
        </authorList>
    </citation>
    <scope>NUCLEOTIDE SEQUENCE [LARGE SCALE MRNA] (ISOFORMS 1 AND 2)</scope>
</reference>
<reference key="3">
    <citation type="journal article" date="2007" name="BMC Genomics">
        <title>The full-ORF clone resource of the German cDNA consortium.</title>
        <authorList>
            <person name="Bechtel S."/>
            <person name="Rosenfelder H."/>
            <person name="Duda A."/>
            <person name="Schmidt C.P."/>
            <person name="Ernst U."/>
            <person name="Wellenreuther R."/>
            <person name="Mehrle A."/>
            <person name="Schuster C."/>
            <person name="Bahr A."/>
            <person name="Bloecker H."/>
            <person name="Heubner D."/>
            <person name="Hoerlein A."/>
            <person name="Michel G."/>
            <person name="Wedler H."/>
            <person name="Koehrer K."/>
            <person name="Ottenwaelder B."/>
            <person name="Poustka A."/>
            <person name="Wiemann S."/>
            <person name="Schupp I."/>
        </authorList>
    </citation>
    <scope>NUCLEOTIDE SEQUENCE [LARGE SCALE MRNA] OF 35-525 (ISOFORM 1)</scope>
    <source>
        <tissue>Brain</tissue>
    </source>
</reference>
<reference key="4">
    <citation type="submission" date="2004-06" db="EMBL/GenBank/DDBJ databases">
        <title>Cloning of human full open reading frames in Gateway(TM) system entry vector (pDONR201).</title>
        <authorList>
            <person name="Ebert L."/>
            <person name="Schick M."/>
            <person name="Neubert P."/>
            <person name="Schatten R."/>
            <person name="Henze S."/>
            <person name="Korn B."/>
        </authorList>
    </citation>
    <scope>NUCLEOTIDE SEQUENCE [LARGE SCALE MRNA] OF 378-525</scope>
</reference>
<reference key="5">
    <citation type="journal article" date="2004" name="Nature">
        <title>The sequence and analysis of duplication-rich human chromosome 16.</title>
        <authorList>
            <person name="Martin J."/>
            <person name="Han C."/>
            <person name="Gordon L.A."/>
            <person name="Terry A."/>
            <person name="Prabhakar S."/>
            <person name="She X."/>
            <person name="Xie G."/>
            <person name="Hellsten U."/>
            <person name="Chan Y.M."/>
            <person name="Altherr M."/>
            <person name="Couronne O."/>
            <person name="Aerts A."/>
            <person name="Bajorek E."/>
            <person name="Black S."/>
            <person name="Blumer H."/>
            <person name="Branscomb E."/>
            <person name="Brown N.C."/>
            <person name="Bruno W.J."/>
            <person name="Buckingham J.M."/>
            <person name="Callen D.F."/>
            <person name="Campbell C.S."/>
            <person name="Campbell M.L."/>
            <person name="Campbell E.W."/>
            <person name="Caoile C."/>
            <person name="Challacombe J.F."/>
            <person name="Chasteen L.A."/>
            <person name="Chertkov O."/>
            <person name="Chi H.C."/>
            <person name="Christensen M."/>
            <person name="Clark L.M."/>
            <person name="Cohn J.D."/>
            <person name="Denys M."/>
            <person name="Detter J.C."/>
            <person name="Dickson M."/>
            <person name="Dimitrijevic-Bussod M."/>
            <person name="Escobar J."/>
            <person name="Fawcett J.J."/>
            <person name="Flowers D."/>
            <person name="Fotopulos D."/>
            <person name="Glavina T."/>
            <person name="Gomez M."/>
            <person name="Gonzales E."/>
            <person name="Goodstein D."/>
            <person name="Goodwin L.A."/>
            <person name="Grady D.L."/>
            <person name="Grigoriev I."/>
            <person name="Groza M."/>
            <person name="Hammon N."/>
            <person name="Hawkins T."/>
            <person name="Haydu L."/>
            <person name="Hildebrand C.E."/>
            <person name="Huang W."/>
            <person name="Israni S."/>
            <person name="Jett J."/>
            <person name="Jewett P.B."/>
            <person name="Kadner K."/>
            <person name="Kimball H."/>
            <person name="Kobayashi A."/>
            <person name="Krawczyk M.-C."/>
            <person name="Leyba T."/>
            <person name="Longmire J.L."/>
            <person name="Lopez F."/>
            <person name="Lou Y."/>
            <person name="Lowry S."/>
            <person name="Ludeman T."/>
            <person name="Manohar C.F."/>
            <person name="Mark G.A."/>
            <person name="McMurray K.L."/>
            <person name="Meincke L.J."/>
            <person name="Morgan J."/>
            <person name="Moyzis R.K."/>
            <person name="Mundt M.O."/>
            <person name="Munk A.C."/>
            <person name="Nandkeshwar R.D."/>
            <person name="Pitluck S."/>
            <person name="Pollard M."/>
            <person name="Predki P."/>
            <person name="Parson-Quintana B."/>
            <person name="Ramirez L."/>
            <person name="Rash S."/>
            <person name="Retterer J."/>
            <person name="Ricke D.O."/>
            <person name="Robinson D.L."/>
            <person name="Rodriguez A."/>
            <person name="Salamov A."/>
            <person name="Saunders E.H."/>
            <person name="Scott D."/>
            <person name="Shough T."/>
            <person name="Stallings R.L."/>
            <person name="Stalvey M."/>
            <person name="Sutherland R.D."/>
            <person name="Tapia R."/>
            <person name="Tesmer J.G."/>
            <person name="Thayer N."/>
            <person name="Thompson L.S."/>
            <person name="Tice H."/>
            <person name="Torney D.C."/>
            <person name="Tran-Gyamfi M."/>
            <person name="Tsai M."/>
            <person name="Ulanovsky L.E."/>
            <person name="Ustaszewska A."/>
            <person name="Vo N."/>
            <person name="White P.S."/>
            <person name="Williams A.L."/>
            <person name="Wills P.L."/>
            <person name="Wu J.-R."/>
            <person name="Wu K."/>
            <person name="Yang J."/>
            <person name="DeJong P."/>
            <person name="Bruce D."/>
            <person name="Doggett N.A."/>
            <person name="Deaven L."/>
            <person name="Schmutz J."/>
            <person name="Grimwood J."/>
            <person name="Richardson P."/>
            <person name="Rokhsar D.S."/>
            <person name="Eichler E.E."/>
            <person name="Gilna P."/>
            <person name="Lucas S.M."/>
            <person name="Myers R.M."/>
            <person name="Rubin E.M."/>
            <person name="Pennacchio L.A."/>
        </authorList>
    </citation>
    <scope>NUCLEOTIDE SEQUENCE [LARGE SCALE GENOMIC DNA]</scope>
</reference>
<reference key="6">
    <citation type="journal article" date="2004" name="Genome Res.">
        <title>The status, quality, and expansion of the NIH full-length cDNA project: the Mammalian Gene Collection (MGC).</title>
        <authorList>
            <consortium name="The MGC Project Team"/>
        </authorList>
    </citation>
    <scope>NUCLEOTIDE SEQUENCE [LARGE SCALE MRNA] OF 378-525</scope>
    <source>
        <tissue>Ovary</tissue>
    </source>
</reference>
<reference key="7">
    <citation type="journal article" date="2004" name="Protein Sci.">
        <title>Signal peptide prediction based on analysis of experimentally verified cleavage sites.</title>
        <authorList>
            <person name="Zhang Z."/>
            <person name="Henzel W.J."/>
        </authorList>
    </citation>
    <scope>PROTEIN SEQUENCE OF 23-37</scope>
</reference>
<organism>
    <name type="scientific">Homo sapiens</name>
    <name type="common">Human</name>
    <dbReference type="NCBI Taxonomy" id="9606"/>
    <lineage>
        <taxon>Eukaryota</taxon>
        <taxon>Metazoa</taxon>
        <taxon>Chordata</taxon>
        <taxon>Craniata</taxon>
        <taxon>Vertebrata</taxon>
        <taxon>Euteleostomi</taxon>
        <taxon>Mammalia</taxon>
        <taxon>Eutheria</taxon>
        <taxon>Euarchontoglires</taxon>
        <taxon>Primates</taxon>
        <taxon>Haplorrhini</taxon>
        <taxon>Catarrhini</taxon>
        <taxon>Hominidae</taxon>
        <taxon>Homo</taxon>
    </lineage>
</organism>
<sequence>MALERLCSVLKVLLITVLVVEGIAVAQKTQDGQNIGIKHIPATQCGIWVRTSNGGHFASPNYPDSYPPNKECIYILEAAPRQRIELTFDEHYYIEPSFECRFDHLEVRDGPFGFSPLIDRYCGVKSPPLIRSTGRFMWIKFSSDEELEGLGFRAKYSFIPDPDFTYLGGILNPIPDCQFELSGADGIVRSSQVEQEEKTKPGQAVDCIWTIKATPKAKIYLRFLDYQMEHSNECKRNFVAVYDGSSSIENLKAKFCSTVANDVMLKTGIGVIRMWADEGSRLSRFRMLFTSFVEPPCTSSTFFCHSNMCINNSLVCNGVQNCAYPWDENHCKEKKKAGVFEQITKTHGTIIGITSGIVLVLLIISILVQVKQPRKKVMACKTAFNKTGFQEVFDPPHYELFSLRDKEISADLADLSEELDNYQKMRRSSTASRCIHDHHCGSQASSVKQSRTNLSSMELPFRNDFAQPQPMKTFNSTFKKSSYTFKQGHECPEQALEDRVMEEIPCEIYVRGREDSAQASISIDF</sequence>
<evidence type="ECO:0000250" key="1"/>
<evidence type="ECO:0000250" key="2">
    <source>
        <dbReference type="UniProtKB" id="Q8BNJ6"/>
    </source>
</evidence>
<evidence type="ECO:0000255" key="3"/>
<evidence type="ECO:0000255" key="4">
    <source>
        <dbReference type="PROSITE-ProRule" id="PRU00059"/>
    </source>
</evidence>
<evidence type="ECO:0000255" key="5">
    <source>
        <dbReference type="PROSITE-ProRule" id="PRU00124"/>
    </source>
</evidence>
<evidence type="ECO:0000269" key="6">
    <source>
    </source>
</evidence>
<evidence type="ECO:0000303" key="7">
    <source>
    </source>
</evidence>
<evidence type="ECO:0000305" key="8"/>
<accession>Q8NC67</accession>
<accession>J3KNF1</accession>
<accession>Q7Z381</accession>
<accession>Q8ND51</accession>
<accession>Q96SP4</accession>
<accession>Q9NVY8</accession>
<dbReference type="EMBL" id="AY358718">
    <property type="protein sequence ID" value="AAQ89080.1"/>
    <property type="molecule type" value="mRNA"/>
</dbReference>
<dbReference type="EMBL" id="AK001292">
    <property type="protein sequence ID" value="BAA91604.1"/>
    <property type="molecule type" value="mRNA"/>
</dbReference>
<dbReference type="EMBL" id="AK027478">
    <property type="protein sequence ID" value="BAB55141.1"/>
    <property type="molecule type" value="mRNA"/>
</dbReference>
<dbReference type="EMBL" id="AK027630">
    <property type="protein sequence ID" value="BAB55247.1"/>
    <property type="molecule type" value="mRNA"/>
</dbReference>
<dbReference type="EMBL" id="AK074937">
    <property type="protein sequence ID" value="BAC11303.1"/>
    <property type="molecule type" value="mRNA"/>
</dbReference>
<dbReference type="EMBL" id="AL834404">
    <property type="protein sequence ID" value="CAD39066.1"/>
    <property type="molecule type" value="mRNA"/>
</dbReference>
<dbReference type="EMBL" id="BX538063">
    <property type="protein sequence ID" value="CAD97994.1"/>
    <property type="molecule type" value="mRNA"/>
</dbReference>
<dbReference type="EMBL" id="CR457255">
    <property type="protein sequence ID" value="CAG33536.1"/>
    <property type="molecule type" value="mRNA"/>
</dbReference>
<dbReference type="EMBL" id="AC007338">
    <property type="status" value="NOT_ANNOTATED_CDS"/>
    <property type="molecule type" value="Genomic_DNA"/>
</dbReference>
<dbReference type="EMBL" id="AC007494">
    <property type="status" value="NOT_ANNOTATED_CDS"/>
    <property type="molecule type" value="Genomic_DNA"/>
</dbReference>
<dbReference type="EMBL" id="BC012381">
    <property type="protein sequence ID" value="AAH12381.1"/>
    <property type="molecule type" value="mRNA"/>
</dbReference>
<dbReference type="CCDS" id="CCDS10727.1">
    <molecule id="Q8NC67-1"/>
</dbReference>
<dbReference type="CCDS" id="CCDS58460.1">
    <molecule id="Q8NC67-3"/>
</dbReference>
<dbReference type="RefSeq" id="NP_001188406.1">
    <molecule id="Q8NC67-3"/>
    <property type="nucleotide sequence ID" value="NM_001201477.2"/>
</dbReference>
<dbReference type="RefSeq" id="NP_060562.3">
    <molecule id="Q8NC67-1"/>
    <property type="nucleotide sequence ID" value="NM_018092.4"/>
</dbReference>
<dbReference type="SMR" id="Q8NC67"/>
<dbReference type="BioGRID" id="123589">
    <property type="interactions" value="68"/>
</dbReference>
<dbReference type="FunCoup" id="Q8NC67">
    <property type="interactions" value="532"/>
</dbReference>
<dbReference type="IntAct" id="Q8NC67">
    <property type="interactions" value="49"/>
</dbReference>
<dbReference type="STRING" id="9606.ENSP00000455169"/>
<dbReference type="TCDB" id="8.A.47.1.2">
    <property type="family name" value="the neuropilin and tolloid-like (neto) family"/>
</dbReference>
<dbReference type="GlyCosmos" id="Q8NC67">
    <property type="glycosylation" value="2 sites, 1 glycan"/>
</dbReference>
<dbReference type="GlyGen" id="Q8NC67">
    <property type="glycosylation" value="3 sites, 1 N-linked glycan (1 site), 1 O-linked glycan (1 site)"/>
</dbReference>
<dbReference type="iPTMnet" id="Q8NC67"/>
<dbReference type="PhosphoSitePlus" id="Q8NC67"/>
<dbReference type="BioMuta" id="NETO2"/>
<dbReference type="DMDM" id="59798464"/>
<dbReference type="jPOST" id="Q8NC67"/>
<dbReference type="MassIVE" id="Q8NC67"/>
<dbReference type="PaxDb" id="9606-ENSP00000455169"/>
<dbReference type="PeptideAtlas" id="Q8NC67"/>
<dbReference type="ProteomicsDB" id="72857">
    <molecule id="Q8NC67-1"/>
</dbReference>
<dbReference type="ProteomicsDB" id="72858">
    <molecule id="Q8NC67-2"/>
</dbReference>
<dbReference type="Antibodypedia" id="2630">
    <property type="antibodies" value="193 antibodies from 27 providers"/>
</dbReference>
<dbReference type="DNASU" id="81831"/>
<dbReference type="Ensembl" id="ENST00000303155.9">
    <molecule id="Q8NC67-3"/>
    <property type="protein sequence ID" value="ENSP00000306726.5"/>
    <property type="gene ID" value="ENSG00000171208.10"/>
</dbReference>
<dbReference type="Ensembl" id="ENST00000562435.6">
    <molecule id="Q8NC67-1"/>
    <property type="protein sequence ID" value="ENSP00000455169.1"/>
    <property type="gene ID" value="ENSG00000171208.10"/>
</dbReference>
<dbReference type="GeneID" id="81831"/>
<dbReference type="KEGG" id="hsa:81831"/>
<dbReference type="MANE-Select" id="ENST00000562435.6">
    <property type="protein sequence ID" value="ENSP00000455169.1"/>
    <property type="RefSeq nucleotide sequence ID" value="NM_018092.5"/>
    <property type="RefSeq protein sequence ID" value="NP_060562.3"/>
</dbReference>
<dbReference type="UCSC" id="uc002eer.3">
    <molecule id="Q8NC67-1"/>
    <property type="organism name" value="human"/>
</dbReference>
<dbReference type="AGR" id="HGNC:14644"/>
<dbReference type="CTD" id="81831"/>
<dbReference type="DisGeNET" id="81831"/>
<dbReference type="GeneCards" id="NETO2"/>
<dbReference type="HGNC" id="HGNC:14644">
    <property type="gene designation" value="NETO2"/>
</dbReference>
<dbReference type="HPA" id="ENSG00000171208">
    <property type="expression patterns" value="Tissue enhanced (lymphoid)"/>
</dbReference>
<dbReference type="MalaCards" id="NETO2"/>
<dbReference type="MIM" id="607974">
    <property type="type" value="gene"/>
</dbReference>
<dbReference type="neXtProt" id="NX_Q8NC67"/>
<dbReference type="OpenTargets" id="ENSG00000171208"/>
<dbReference type="PharmGKB" id="PA31559"/>
<dbReference type="VEuPathDB" id="HostDB:ENSG00000171208"/>
<dbReference type="eggNOG" id="ENOG502QW0Z">
    <property type="taxonomic scope" value="Eukaryota"/>
</dbReference>
<dbReference type="GeneTree" id="ENSGT00940000156041"/>
<dbReference type="HOGENOM" id="CLU_015228_0_1_1"/>
<dbReference type="InParanoid" id="Q8NC67"/>
<dbReference type="OMA" id="KECIYVL"/>
<dbReference type="OrthoDB" id="9971251at2759"/>
<dbReference type="PAN-GO" id="Q8NC67">
    <property type="GO annotations" value="2 GO annotations based on evolutionary models"/>
</dbReference>
<dbReference type="PhylomeDB" id="Q8NC67"/>
<dbReference type="PathwayCommons" id="Q8NC67"/>
<dbReference type="SignaLink" id="Q8NC67"/>
<dbReference type="SIGNOR" id="Q8NC67"/>
<dbReference type="BioGRID-ORCS" id="81831">
    <property type="hits" value="20 hits in 1142 CRISPR screens"/>
</dbReference>
<dbReference type="ChiTaRS" id="NETO2">
    <property type="organism name" value="human"/>
</dbReference>
<dbReference type="GenomeRNAi" id="81831"/>
<dbReference type="Pharos" id="Q8NC67">
    <property type="development level" value="Tbio"/>
</dbReference>
<dbReference type="PRO" id="PR:Q8NC67"/>
<dbReference type="Proteomes" id="UP000005640">
    <property type="component" value="Chromosome 16"/>
</dbReference>
<dbReference type="RNAct" id="Q8NC67">
    <property type="molecule type" value="protein"/>
</dbReference>
<dbReference type="Bgee" id="ENSG00000171208">
    <property type="expression patterns" value="Expressed in secondary oocyte and 150 other cell types or tissues"/>
</dbReference>
<dbReference type="ExpressionAtlas" id="Q8NC67">
    <property type="expression patterns" value="baseline and differential"/>
</dbReference>
<dbReference type="GO" id="GO:0098978">
    <property type="term" value="C:glutamatergic synapse"/>
    <property type="evidence" value="ECO:0007669"/>
    <property type="project" value="Ensembl"/>
</dbReference>
<dbReference type="GO" id="GO:0014069">
    <property type="term" value="C:postsynaptic density"/>
    <property type="evidence" value="ECO:0000318"/>
    <property type="project" value="GO_Central"/>
</dbReference>
<dbReference type="GO" id="GO:0098839">
    <property type="term" value="C:postsynaptic density membrane"/>
    <property type="evidence" value="ECO:0007669"/>
    <property type="project" value="Ensembl"/>
</dbReference>
<dbReference type="GO" id="GO:0035255">
    <property type="term" value="F:ionotropic glutamate receptor binding"/>
    <property type="evidence" value="ECO:0000318"/>
    <property type="project" value="GO_Central"/>
</dbReference>
<dbReference type="GO" id="GO:0099645">
    <property type="term" value="P:neurotransmitter receptor localization to postsynaptic specialization membrane"/>
    <property type="evidence" value="ECO:0007669"/>
    <property type="project" value="Ensembl"/>
</dbReference>
<dbReference type="GO" id="GO:0098696">
    <property type="term" value="P:regulation of neurotransmitter receptor localization to postsynaptic specialization membrane"/>
    <property type="evidence" value="ECO:0007669"/>
    <property type="project" value="Ensembl"/>
</dbReference>
<dbReference type="CDD" id="cd00041">
    <property type="entry name" value="CUB"/>
    <property type="match status" value="2"/>
</dbReference>
<dbReference type="CDD" id="cd00112">
    <property type="entry name" value="LDLa"/>
    <property type="match status" value="1"/>
</dbReference>
<dbReference type="FunFam" id="2.60.120.290:FF:000016">
    <property type="entry name" value="neuropilin and tolloid-like protein 2"/>
    <property type="match status" value="1"/>
</dbReference>
<dbReference type="FunFam" id="2.60.120.290:FF:000020">
    <property type="entry name" value="Neuropilin and tolloid-like protein 2 isoform 1"/>
    <property type="match status" value="1"/>
</dbReference>
<dbReference type="Gene3D" id="4.10.400.10">
    <property type="entry name" value="Low-density Lipoprotein Receptor"/>
    <property type="match status" value="1"/>
</dbReference>
<dbReference type="Gene3D" id="2.60.120.290">
    <property type="entry name" value="Spermadhesin, CUB domain"/>
    <property type="match status" value="2"/>
</dbReference>
<dbReference type="InterPro" id="IPR000859">
    <property type="entry name" value="CUB_dom"/>
</dbReference>
<dbReference type="InterPro" id="IPR036055">
    <property type="entry name" value="LDL_receptor-like_sf"/>
</dbReference>
<dbReference type="InterPro" id="IPR023415">
    <property type="entry name" value="LDLR_class-A_CS"/>
</dbReference>
<dbReference type="InterPro" id="IPR002172">
    <property type="entry name" value="LDrepeatLR_classA_rpt"/>
</dbReference>
<dbReference type="InterPro" id="IPR035914">
    <property type="entry name" value="Sperma_CUB_dom_sf"/>
</dbReference>
<dbReference type="PANTHER" id="PTHR24251:SF26">
    <property type="entry name" value="NEUROPILIN AND TOLLOID-LIKE PROTEIN 2"/>
    <property type="match status" value="1"/>
</dbReference>
<dbReference type="PANTHER" id="PTHR24251">
    <property type="entry name" value="OVOCHYMASE-RELATED"/>
    <property type="match status" value="1"/>
</dbReference>
<dbReference type="Pfam" id="PF00431">
    <property type="entry name" value="CUB"/>
    <property type="match status" value="2"/>
</dbReference>
<dbReference type="Pfam" id="PF00057">
    <property type="entry name" value="Ldl_recept_a"/>
    <property type="match status" value="1"/>
</dbReference>
<dbReference type="SMART" id="SM00042">
    <property type="entry name" value="CUB"/>
    <property type="match status" value="2"/>
</dbReference>
<dbReference type="SMART" id="SM00192">
    <property type="entry name" value="LDLa"/>
    <property type="match status" value="1"/>
</dbReference>
<dbReference type="SUPFAM" id="SSF57424">
    <property type="entry name" value="LDL receptor-like module"/>
    <property type="match status" value="1"/>
</dbReference>
<dbReference type="SUPFAM" id="SSF49854">
    <property type="entry name" value="Spermadhesin, CUB domain"/>
    <property type="match status" value="2"/>
</dbReference>
<dbReference type="PROSITE" id="PS01180">
    <property type="entry name" value="CUB"/>
    <property type="match status" value="2"/>
</dbReference>
<dbReference type="PROSITE" id="PS01209">
    <property type="entry name" value="LDLRA_1"/>
    <property type="match status" value="1"/>
</dbReference>
<dbReference type="PROSITE" id="PS50068">
    <property type="entry name" value="LDLRA_2"/>
    <property type="match status" value="1"/>
</dbReference>
<gene>
    <name type="primary">NETO2</name>
    <name type="synonym">BTCL2</name>
    <name type="ORF">UNQ1926/PRO4401</name>
</gene>
<feature type="signal peptide" evidence="6">
    <location>
        <begin position="1"/>
        <end position="22"/>
    </location>
</feature>
<feature type="chain" id="PRO_0000021801" description="Neuropilin and tolloid-like protein 2">
    <location>
        <begin position="23"/>
        <end position="525"/>
    </location>
</feature>
<feature type="topological domain" description="Extracellular" evidence="3">
    <location>
        <begin position="23"/>
        <end position="347"/>
    </location>
</feature>
<feature type="transmembrane region" description="Helical" evidence="3">
    <location>
        <begin position="348"/>
        <end position="368"/>
    </location>
</feature>
<feature type="topological domain" description="Cytoplasmic" evidence="3">
    <location>
        <begin position="369"/>
        <end position="525"/>
    </location>
</feature>
<feature type="domain" description="CUB 1" evidence="4">
    <location>
        <begin position="45"/>
        <end position="159"/>
    </location>
</feature>
<feature type="domain" description="CUB 2" evidence="4">
    <location>
        <begin position="177"/>
        <end position="292"/>
    </location>
</feature>
<feature type="domain" description="LDL-receptor class A" evidence="5">
    <location>
        <begin position="296"/>
        <end position="332"/>
    </location>
</feature>
<feature type="modified residue" description="Phosphoserine" evidence="2">
    <location>
        <position position="409"/>
    </location>
</feature>
<feature type="glycosylation site" description="N-linked (GlcNAc...) asparagine" evidence="3">
    <location>
        <position position="311"/>
    </location>
</feature>
<feature type="disulfide bond" evidence="1">
    <location>
        <begin position="45"/>
        <end position="72"/>
    </location>
</feature>
<feature type="disulfide bond" evidence="1">
    <location>
        <begin position="100"/>
        <end position="122"/>
    </location>
</feature>
<feature type="disulfide bond" evidence="1">
    <location>
        <begin position="177"/>
        <end position="207"/>
    </location>
</feature>
<feature type="disulfide bond" evidence="1">
    <location>
        <begin position="234"/>
        <end position="256"/>
    </location>
</feature>
<feature type="disulfide bond" evidence="1">
    <location>
        <begin position="297"/>
        <end position="309"/>
    </location>
</feature>
<feature type="disulfide bond" evidence="1">
    <location>
        <begin position="304"/>
        <end position="322"/>
    </location>
</feature>
<feature type="disulfide bond" evidence="1">
    <location>
        <begin position="316"/>
        <end position="331"/>
    </location>
</feature>
<feature type="splice variant" id="VSP_012856" description="In isoform 2." evidence="7">
    <location>
        <begin position="1"/>
        <end position="324"/>
    </location>
</feature>
<feature type="splice variant" id="VSP_053795" description="In isoform 3." evidence="8">
    <location>
        <begin position="169"/>
        <end position="175"/>
    </location>
</feature>
<feature type="splice variant" id="VSP_012857" description="In isoform 2." evidence="7">
    <original>PWDENHCKE</original>
    <variation>MLFTSFVEQ</variation>
    <location>
        <begin position="325"/>
        <end position="333"/>
    </location>
</feature>
<feature type="sequence variant" id="VAR_051232" description="In dbSNP:rs2231983.">
    <original>S</original>
    <variation>T</variation>
    <location>
        <position position="456"/>
    </location>
</feature>
<feature type="sequence conflict" description="In Ref. 3; CAD97994." evidence="8" ref="3">
    <original>I</original>
    <variation>V</variation>
    <location>
        <position position="211"/>
    </location>
</feature>
<feature type="sequence conflict" description="In Ref. 3; CAD97994." evidence="8" ref="3">
    <original>E</original>
    <variation>G</variation>
    <location>
        <position position="278"/>
    </location>
</feature>
<feature type="sequence conflict" description="In Ref. 2; BAB55247." evidence="8" ref="2">
    <original>K</original>
    <variation>R</variation>
    <location>
        <position position="424"/>
    </location>
</feature>
<feature type="sequence conflict" description="In Ref. 2; BAB55247." evidence="8" ref="2">
    <original>F</original>
    <variation>L</variation>
    <location>
        <position position="461"/>
    </location>
</feature>
<feature type="sequence conflict" description="In Ref. 3; CAD97994." evidence="8" ref="3">
    <original>S</original>
    <variation>G</variation>
    <location>
        <position position="482"/>
    </location>
</feature>
<keyword id="KW-0025">Alternative splicing</keyword>
<keyword id="KW-0903">Direct protein sequencing</keyword>
<keyword id="KW-1015">Disulfide bond</keyword>
<keyword id="KW-0325">Glycoprotein</keyword>
<keyword id="KW-0472">Membrane</keyword>
<keyword id="KW-0597">Phosphoprotein</keyword>
<keyword id="KW-1267">Proteomics identification</keyword>
<keyword id="KW-0675">Receptor</keyword>
<keyword id="KW-1185">Reference proteome</keyword>
<keyword id="KW-0677">Repeat</keyword>
<keyword id="KW-0732">Signal</keyword>
<keyword id="KW-0812">Transmembrane</keyword>
<keyword id="KW-1133">Transmembrane helix</keyword>